<name>IF1_BARQU</name>
<dbReference type="EMBL" id="BX897700">
    <property type="protein sequence ID" value="CAF26581.1"/>
    <property type="molecule type" value="Genomic_DNA"/>
</dbReference>
<dbReference type="RefSeq" id="WP_004857577.1">
    <property type="nucleotide sequence ID" value="NC_005955.1"/>
</dbReference>
<dbReference type="SMR" id="Q6FYU2"/>
<dbReference type="GeneID" id="56533461"/>
<dbReference type="KEGG" id="bqu:BQ11200"/>
<dbReference type="eggNOG" id="COG0361">
    <property type="taxonomic scope" value="Bacteria"/>
</dbReference>
<dbReference type="HOGENOM" id="CLU_151267_1_0_5"/>
<dbReference type="OrthoDB" id="9803250at2"/>
<dbReference type="Proteomes" id="UP000000597">
    <property type="component" value="Chromosome"/>
</dbReference>
<dbReference type="GO" id="GO:0005829">
    <property type="term" value="C:cytosol"/>
    <property type="evidence" value="ECO:0007669"/>
    <property type="project" value="TreeGrafter"/>
</dbReference>
<dbReference type="GO" id="GO:0043022">
    <property type="term" value="F:ribosome binding"/>
    <property type="evidence" value="ECO:0007669"/>
    <property type="project" value="UniProtKB-UniRule"/>
</dbReference>
<dbReference type="GO" id="GO:0019843">
    <property type="term" value="F:rRNA binding"/>
    <property type="evidence" value="ECO:0007669"/>
    <property type="project" value="UniProtKB-UniRule"/>
</dbReference>
<dbReference type="GO" id="GO:0003743">
    <property type="term" value="F:translation initiation factor activity"/>
    <property type="evidence" value="ECO:0007669"/>
    <property type="project" value="UniProtKB-UniRule"/>
</dbReference>
<dbReference type="CDD" id="cd04451">
    <property type="entry name" value="S1_IF1"/>
    <property type="match status" value="1"/>
</dbReference>
<dbReference type="FunFam" id="2.40.50.140:FF:000002">
    <property type="entry name" value="Translation initiation factor IF-1"/>
    <property type="match status" value="1"/>
</dbReference>
<dbReference type="Gene3D" id="2.40.50.140">
    <property type="entry name" value="Nucleic acid-binding proteins"/>
    <property type="match status" value="1"/>
</dbReference>
<dbReference type="HAMAP" id="MF_00075">
    <property type="entry name" value="IF_1"/>
    <property type="match status" value="1"/>
</dbReference>
<dbReference type="InterPro" id="IPR012340">
    <property type="entry name" value="NA-bd_OB-fold"/>
</dbReference>
<dbReference type="InterPro" id="IPR006196">
    <property type="entry name" value="RNA-binding_domain_S1_IF1"/>
</dbReference>
<dbReference type="InterPro" id="IPR004368">
    <property type="entry name" value="TIF_IF1"/>
</dbReference>
<dbReference type="NCBIfam" id="TIGR00008">
    <property type="entry name" value="infA"/>
    <property type="match status" value="1"/>
</dbReference>
<dbReference type="PANTHER" id="PTHR33370">
    <property type="entry name" value="TRANSLATION INITIATION FACTOR IF-1, CHLOROPLASTIC"/>
    <property type="match status" value="1"/>
</dbReference>
<dbReference type="PANTHER" id="PTHR33370:SF1">
    <property type="entry name" value="TRANSLATION INITIATION FACTOR IF-1, CHLOROPLASTIC"/>
    <property type="match status" value="1"/>
</dbReference>
<dbReference type="Pfam" id="PF01176">
    <property type="entry name" value="eIF-1a"/>
    <property type="match status" value="1"/>
</dbReference>
<dbReference type="SUPFAM" id="SSF50249">
    <property type="entry name" value="Nucleic acid-binding proteins"/>
    <property type="match status" value="1"/>
</dbReference>
<dbReference type="PROSITE" id="PS50832">
    <property type="entry name" value="S1_IF1_TYPE"/>
    <property type="match status" value="1"/>
</dbReference>
<protein>
    <recommendedName>
        <fullName evidence="1">Translation initiation factor IF-1</fullName>
    </recommendedName>
</protein>
<organism>
    <name type="scientific">Bartonella quintana (strain Toulouse)</name>
    <name type="common">Rochalimaea quintana</name>
    <dbReference type="NCBI Taxonomy" id="283165"/>
    <lineage>
        <taxon>Bacteria</taxon>
        <taxon>Pseudomonadati</taxon>
        <taxon>Pseudomonadota</taxon>
        <taxon>Alphaproteobacteria</taxon>
        <taxon>Hyphomicrobiales</taxon>
        <taxon>Bartonellaceae</taxon>
        <taxon>Bartonella</taxon>
    </lineage>
</organism>
<keyword id="KW-0963">Cytoplasm</keyword>
<keyword id="KW-0396">Initiation factor</keyword>
<keyword id="KW-0648">Protein biosynthesis</keyword>
<keyword id="KW-0694">RNA-binding</keyword>
<keyword id="KW-0699">rRNA-binding</keyword>
<proteinExistence type="inferred from homology"/>
<reference key="1">
    <citation type="journal article" date="2004" name="Proc. Natl. Acad. Sci. U.S.A.">
        <title>The louse-borne human pathogen Bartonella quintana is a genomic derivative of the zoonotic agent Bartonella henselae.</title>
        <authorList>
            <person name="Alsmark U.C.M."/>
            <person name="Frank A.C."/>
            <person name="Karlberg E.O."/>
            <person name="Legault B.-A."/>
            <person name="Ardell D.H."/>
            <person name="Canbaeck B."/>
            <person name="Eriksson A.-S."/>
            <person name="Naeslund A.K."/>
            <person name="Handley S.A."/>
            <person name="Huvet M."/>
            <person name="La Scola B."/>
            <person name="Holmberg M."/>
            <person name="Andersson S.G.E."/>
        </authorList>
    </citation>
    <scope>NUCLEOTIDE SEQUENCE [LARGE SCALE GENOMIC DNA]</scope>
    <source>
        <strain>Toulouse</strain>
    </source>
</reference>
<gene>
    <name evidence="1" type="primary">infA</name>
    <name type="ordered locus">BQ11200</name>
</gene>
<sequence>MSKEEVLEFSGIVTELLPNAMFRVKLENDHEIIAHTAGRMRKNRIRVLAGDKIMVEMTPYDLTKGRITYRYK</sequence>
<comment type="function">
    <text evidence="1">One of the essential components for the initiation of protein synthesis. Stabilizes the binding of IF-2 and IF-3 on the 30S subunit to which N-formylmethionyl-tRNA(fMet) subsequently binds. Helps modulate mRNA selection, yielding the 30S pre-initiation complex (PIC). Upon addition of the 50S ribosomal subunit IF-1, IF-2 and IF-3 are released leaving the mature 70S translation initiation complex.</text>
</comment>
<comment type="subunit">
    <text evidence="1">Component of the 30S ribosomal translation pre-initiation complex which assembles on the 30S ribosome in the order IF-2 and IF-3, IF-1 and N-formylmethionyl-tRNA(fMet); mRNA recruitment can occur at any time during PIC assembly.</text>
</comment>
<comment type="subcellular location">
    <subcellularLocation>
        <location evidence="1">Cytoplasm</location>
    </subcellularLocation>
</comment>
<comment type="similarity">
    <text evidence="1">Belongs to the IF-1 family.</text>
</comment>
<accession>Q6FYU2</accession>
<evidence type="ECO:0000255" key="1">
    <source>
        <dbReference type="HAMAP-Rule" id="MF_00075"/>
    </source>
</evidence>
<feature type="chain" id="PRO_0000095741" description="Translation initiation factor IF-1">
    <location>
        <begin position="1"/>
        <end position="72"/>
    </location>
</feature>
<feature type="domain" description="S1-like" evidence="1">
    <location>
        <begin position="1"/>
        <end position="72"/>
    </location>
</feature>